<accession>Q2NW07</accession>
<protein>
    <recommendedName>
        <fullName evidence="1">UPF0391 membrane protein SG0393</fullName>
    </recommendedName>
</protein>
<reference key="1">
    <citation type="journal article" date="2006" name="Genome Res.">
        <title>Massive genome erosion and functional adaptations provide insights into the symbiotic lifestyle of Sodalis glossinidius in the tsetse host.</title>
        <authorList>
            <person name="Toh H."/>
            <person name="Weiss B.L."/>
            <person name="Perkin S.A.H."/>
            <person name="Yamashita A."/>
            <person name="Oshima K."/>
            <person name="Hattori M."/>
            <person name="Aksoy S."/>
        </authorList>
    </citation>
    <scope>NUCLEOTIDE SEQUENCE [LARGE SCALE GENOMIC DNA]</scope>
    <source>
        <strain>morsitans</strain>
    </source>
</reference>
<comment type="subcellular location">
    <subcellularLocation>
        <location evidence="1">Cell membrane</location>
        <topology evidence="1">Multi-pass membrane protein</topology>
    </subcellularLocation>
</comment>
<comment type="similarity">
    <text evidence="1">Belongs to the UPF0391 family.</text>
</comment>
<dbReference type="EMBL" id="AP008232">
    <property type="protein sequence ID" value="BAE73668.1"/>
    <property type="molecule type" value="Genomic_DNA"/>
</dbReference>
<dbReference type="RefSeq" id="WP_011410256.1">
    <property type="nucleotide sequence ID" value="NZ_LN854557.1"/>
</dbReference>
<dbReference type="KEGG" id="sgl:SG0393"/>
<dbReference type="eggNOG" id="COG5487">
    <property type="taxonomic scope" value="Bacteria"/>
</dbReference>
<dbReference type="HOGENOM" id="CLU_187346_2_0_6"/>
<dbReference type="Proteomes" id="UP000001932">
    <property type="component" value="Chromosome"/>
</dbReference>
<dbReference type="GO" id="GO:0005886">
    <property type="term" value="C:plasma membrane"/>
    <property type="evidence" value="ECO:0007669"/>
    <property type="project" value="UniProtKB-SubCell"/>
</dbReference>
<dbReference type="HAMAP" id="MF_01361">
    <property type="entry name" value="UPF0391"/>
    <property type="match status" value="1"/>
</dbReference>
<dbReference type="InterPro" id="IPR009760">
    <property type="entry name" value="DUF1328"/>
</dbReference>
<dbReference type="NCBIfam" id="NF010229">
    <property type="entry name" value="PRK13682.1-4"/>
    <property type="match status" value="1"/>
</dbReference>
<dbReference type="NCBIfam" id="NF010230">
    <property type="entry name" value="PRK13682.1-5"/>
    <property type="match status" value="1"/>
</dbReference>
<dbReference type="Pfam" id="PF07043">
    <property type="entry name" value="DUF1328"/>
    <property type="match status" value="1"/>
</dbReference>
<dbReference type="PIRSF" id="PIRSF036466">
    <property type="entry name" value="UCP036466"/>
    <property type="match status" value="1"/>
</dbReference>
<name>Y393_SODGM</name>
<proteinExistence type="inferred from homology"/>
<keyword id="KW-1003">Cell membrane</keyword>
<keyword id="KW-0472">Membrane</keyword>
<keyword id="KW-0812">Transmembrane</keyword>
<keyword id="KW-1133">Transmembrane helix</keyword>
<feature type="chain" id="PRO_0000256791" description="UPF0391 membrane protein SG0393">
    <location>
        <begin position="1"/>
        <end position="53"/>
    </location>
</feature>
<feature type="transmembrane region" description="Helical" evidence="1">
    <location>
        <begin position="4"/>
        <end position="24"/>
    </location>
</feature>
<feature type="transmembrane region" description="Helical" evidence="1">
    <location>
        <begin position="27"/>
        <end position="47"/>
    </location>
</feature>
<gene>
    <name type="ordered locus">SG0393</name>
</gene>
<evidence type="ECO:0000255" key="1">
    <source>
        <dbReference type="HAMAP-Rule" id="MF_01361"/>
    </source>
</evidence>
<organism>
    <name type="scientific">Sodalis glossinidius (strain morsitans)</name>
    <dbReference type="NCBI Taxonomy" id="343509"/>
    <lineage>
        <taxon>Bacteria</taxon>
        <taxon>Pseudomonadati</taxon>
        <taxon>Pseudomonadota</taxon>
        <taxon>Gammaproteobacteria</taxon>
        <taxon>Enterobacterales</taxon>
        <taxon>Bruguierivoracaceae</taxon>
        <taxon>Sodalis</taxon>
    </lineage>
</organism>
<sequence length="53" mass="5637">MFRWGIIFLVIALIAAALGFGGLAGTAAWAAKIVFVVGIILFLISLFTGRRGR</sequence>